<dbReference type="EC" id="2.1.1.195" evidence="1"/>
<dbReference type="EMBL" id="CP000744">
    <property type="protein sequence ID" value="ABR83002.1"/>
    <property type="molecule type" value="Genomic_DNA"/>
</dbReference>
<dbReference type="RefSeq" id="WP_012075213.1">
    <property type="nucleotide sequence ID" value="NC_009656.1"/>
</dbReference>
<dbReference type="SMR" id="A6V3I3"/>
<dbReference type="KEGG" id="pap:PSPA7_2246"/>
<dbReference type="HOGENOM" id="CLU_041273_0_0_6"/>
<dbReference type="UniPathway" id="UPA00148">
    <property type="reaction ID" value="UER00227"/>
</dbReference>
<dbReference type="Proteomes" id="UP000001582">
    <property type="component" value="Chromosome"/>
</dbReference>
<dbReference type="GO" id="GO:0043780">
    <property type="term" value="F:cobalt-precorrin-5B C1-methyltransferase activity"/>
    <property type="evidence" value="ECO:0007669"/>
    <property type="project" value="RHEA"/>
</dbReference>
<dbReference type="GO" id="GO:0019251">
    <property type="term" value="P:anaerobic cobalamin biosynthetic process"/>
    <property type="evidence" value="ECO:0007669"/>
    <property type="project" value="UniProtKB-UniRule"/>
</dbReference>
<dbReference type="GO" id="GO:0032259">
    <property type="term" value="P:methylation"/>
    <property type="evidence" value="ECO:0007669"/>
    <property type="project" value="UniProtKB-KW"/>
</dbReference>
<dbReference type="Gene3D" id="3.30.2110.10">
    <property type="entry name" value="CbiD-like"/>
    <property type="match status" value="1"/>
</dbReference>
<dbReference type="HAMAP" id="MF_00787">
    <property type="entry name" value="CbiD"/>
    <property type="match status" value="1"/>
</dbReference>
<dbReference type="InterPro" id="IPR002748">
    <property type="entry name" value="CbiD"/>
</dbReference>
<dbReference type="InterPro" id="IPR036074">
    <property type="entry name" value="CbiD_sf"/>
</dbReference>
<dbReference type="NCBIfam" id="TIGR00312">
    <property type="entry name" value="cbiD"/>
    <property type="match status" value="1"/>
</dbReference>
<dbReference type="NCBIfam" id="NF000849">
    <property type="entry name" value="PRK00075.1-1"/>
    <property type="match status" value="1"/>
</dbReference>
<dbReference type="PANTHER" id="PTHR35863">
    <property type="entry name" value="COBALT-PRECORRIN-5B C(1)-METHYLTRANSFERASE"/>
    <property type="match status" value="1"/>
</dbReference>
<dbReference type="PANTHER" id="PTHR35863:SF1">
    <property type="entry name" value="COBALT-PRECORRIN-5B C(1)-METHYLTRANSFERASE"/>
    <property type="match status" value="1"/>
</dbReference>
<dbReference type="Pfam" id="PF01888">
    <property type="entry name" value="CbiD"/>
    <property type="match status" value="1"/>
</dbReference>
<dbReference type="PIRSF" id="PIRSF026782">
    <property type="entry name" value="CbiD"/>
    <property type="match status" value="1"/>
</dbReference>
<dbReference type="SUPFAM" id="SSF111342">
    <property type="entry name" value="CbiD-like"/>
    <property type="match status" value="1"/>
</dbReference>
<comment type="function">
    <text evidence="1">Catalyzes the methylation of C-1 in cobalt-precorrin-5B to form cobalt-precorrin-6A.</text>
</comment>
<comment type="catalytic activity">
    <reaction evidence="1">
        <text>Co-precorrin-5B + S-adenosyl-L-methionine = Co-precorrin-6A + S-adenosyl-L-homocysteine</text>
        <dbReference type="Rhea" id="RHEA:26285"/>
        <dbReference type="ChEBI" id="CHEBI:57856"/>
        <dbReference type="ChEBI" id="CHEBI:59789"/>
        <dbReference type="ChEBI" id="CHEBI:60063"/>
        <dbReference type="ChEBI" id="CHEBI:60064"/>
        <dbReference type="EC" id="2.1.1.195"/>
    </reaction>
</comment>
<comment type="pathway">
    <text evidence="1">Cofactor biosynthesis; adenosylcobalamin biosynthesis; cob(II)yrinate a,c-diamide from sirohydrochlorin (anaerobic route): step 6/10.</text>
</comment>
<comment type="similarity">
    <text evidence="1">Belongs to the CbiD family.</text>
</comment>
<keyword id="KW-0169">Cobalamin biosynthesis</keyword>
<keyword id="KW-0489">Methyltransferase</keyword>
<keyword id="KW-0949">S-adenosyl-L-methionine</keyword>
<keyword id="KW-0808">Transferase</keyword>
<reference key="1">
    <citation type="submission" date="2007-06" db="EMBL/GenBank/DDBJ databases">
        <authorList>
            <person name="Dodson R.J."/>
            <person name="Harkins D."/>
            <person name="Paulsen I.T."/>
        </authorList>
    </citation>
    <scope>NUCLEOTIDE SEQUENCE [LARGE SCALE GENOMIC DNA]</scope>
    <source>
        <strain>DSM 24068 / PA7</strain>
    </source>
</reference>
<name>CBID_PSEP7</name>
<feature type="chain" id="PRO_1000046874" description="Cobalt-precorrin-5B C(1)-methyltransferase">
    <location>
        <begin position="1"/>
        <end position="366"/>
    </location>
</feature>
<protein>
    <recommendedName>
        <fullName evidence="1">Cobalt-precorrin-5B C(1)-methyltransferase</fullName>
        <ecNumber evidence="1">2.1.1.195</ecNumber>
    </recommendedName>
    <alternativeName>
        <fullName evidence="1">Cobalt-precorrin-6A synthase</fullName>
    </alternativeName>
</protein>
<evidence type="ECO:0000255" key="1">
    <source>
        <dbReference type="HAMAP-Rule" id="MF_00787"/>
    </source>
</evidence>
<organism>
    <name type="scientific">Pseudomonas paraeruginosa (strain DSM 24068 / PA7)</name>
    <name type="common">Pseudomonas aeruginosa (strain PA7)</name>
    <dbReference type="NCBI Taxonomy" id="381754"/>
    <lineage>
        <taxon>Bacteria</taxon>
        <taxon>Pseudomonadati</taxon>
        <taxon>Pseudomonadota</taxon>
        <taxon>Gammaproteobacteria</taxon>
        <taxon>Pseudomonadales</taxon>
        <taxon>Pseudomonadaceae</taxon>
        <taxon>Pseudomonas</taxon>
        <taxon>Pseudomonas paraeruginosa</taxon>
    </lineage>
</organism>
<sequence>MREETPEQPAPLRSGYTTGSCATATSLAAARLLLGGTTSDAVRIVLPKGQQVPMRLEFCRAWENGAEAGTLKDAGDDPDVTHGALVFARVRLSAAPGVRFHAGPGVGTVTRPGLTLAVGEPAINPVPRQMMERHLTQLAAEHGYTGGFEVTIGIEGGEALALKTMNPRLGILGGLSILGTSGIVRPFSCSAYIASIHQGIDVARANGVRHIAACTGNASEDAMRRRYALPEIALIEMGDFAGAVLKHLRKAPVEKLSLCGGFGKISKLAGGHLDLHSRHSSIDLPQLAGWAAALGASAALQQSMRAANTSQQALAQAHAEGVALGDAVCAHALRFARSIVPAEVRLEVFAIDRQGNLVGQAGEERS</sequence>
<accession>A6V3I3</accession>
<proteinExistence type="inferred from homology"/>
<gene>
    <name evidence="1" type="primary">cbiD</name>
    <name type="ordered locus">PSPA7_2246</name>
</gene>